<feature type="chain" id="PRO_0000393948" description="Cytochrome c oxidase subunit 2">
    <location>
        <begin position="1"/>
        <end position="254"/>
    </location>
</feature>
<feature type="topological domain" description="Mitochondrial intermembrane" evidence="3">
    <location>
        <begin position="12"/>
        <end position="38"/>
    </location>
</feature>
<feature type="transmembrane region" description="Helical" evidence="3">
    <location>
        <begin position="39"/>
        <end position="59"/>
    </location>
</feature>
<feature type="topological domain" description="Mitochondrial matrix" evidence="3">
    <location>
        <begin position="60"/>
        <end position="73"/>
    </location>
</feature>
<feature type="transmembrane region" description="Helical" evidence="3">
    <location>
        <begin position="74"/>
        <end position="94"/>
    </location>
</feature>
<feature type="topological domain" description="Mitochondrial intermembrane" evidence="3">
    <location>
        <begin position="95"/>
        <end position="248"/>
    </location>
</feature>
<feature type="binding site" evidence="1">
    <location>
        <position position="182"/>
    </location>
    <ligand>
        <name>Cu cation</name>
        <dbReference type="ChEBI" id="CHEBI:23378"/>
        <label>A1</label>
    </ligand>
</feature>
<feature type="binding site" evidence="1">
    <location>
        <position position="217"/>
    </location>
    <ligand>
        <name>Cu cation</name>
        <dbReference type="ChEBI" id="CHEBI:23378"/>
        <label>A1</label>
    </ligand>
</feature>
<feature type="binding site" evidence="1">
    <location>
        <position position="217"/>
    </location>
    <ligand>
        <name>Cu cation</name>
        <dbReference type="ChEBI" id="CHEBI:23378"/>
        <label>A2</label>
    </ligand>
</feature>
<feature type="binding site" evidence="1">
    <location>
        <position position="219"/>
    </location>
    <ligand>
        <name>Cu cation</name>
        <dbReference type="ChEBI" id="CHEBI:23378"/>
        <label>A2</label>
    </ligand>
</feature>
<feature type="binding site" evidence="1">
    <location>
        <position position="219"/>
    </location>
    <ligand>
        <name>Mg(2+)</name>
        <dbReference type="ChEBI" id="CHEBI:18420"/>
        <note>ligand shared with subunit 1</note>
    </ligand>
</feature>
<feature type="binding site" evidence="1">
    <location>
        <position position="221"/>
    </location>
    <ligand>
        <name>Cu cation</name>
        <dbReference type="ChEBI" id="CHEBI:23378"/>
        <label>A1</label>
    </ligand>
</feature>
<feature type="binding site" evidence="1">
    <location>
        <position position="221"/>
    </location>
    <ligand>
        <name>Cu cation</name>
        <dbReference type="ChEBI" id="CHEBI:23378"/>
        <label>A2</label>
    </ligand>
</feature>
<feature type="binding site" evidence="1">
    <location>
        <position position="225"/>
    </location>
    <ligand>
        <name>Cu cation</name>
        <dbReference type="ChEBI" id="CHEBI:23378"/>
        <label>A2</label>
    </ligand>
</feature>
<feature type="binding site" evidence="1">
    <location>
        <position position="228"/>
    </location>
    <ligand>
        <name>Cu cation</name>
        <dbReference type="ChEBI" id="CHEBI:23378"/>
        <label>A1</label>
    </ligand>
</feature>
<keyword id="KW-0186">Copper</keyword>
<keyword id="KW-0249">Electron transport</keyword>
<keyword id="KW-0460">Magnesium</keyword>
<keyword id="KW-0472">Membrane</keyword>
<keyword id="KW-0479">Metal-binding</keyword>
<keyword id="KW-0496">Mitochondrion</keyword>
<keyword id="KW-0999">Mitochondrion inner membrane</keyword>
<keyword id="KW-0679">Respiratory chain</keyword>
<keyword id="KW-1278">Translocase</keyword>
<keyword id="KW-0812">Transmembrane</keyword>
<keyword id="KW-1133">Transmembrane helix</keyword>
<keyword id="KW-0813">Transport</keyword>
<accession>Q3T4C0</accession>
<comment type="function">
    <text evidence="1">Component of the cytochrome c oxidase, the last enzyme in the mitochondrial electron transport chain which drives oxidative phosphorylation. The respiratory chain contains 3 multisubunit complexes succinate dehydrogenase (complex II, CII), ubiquinol-cytochrome c oxidoreductase (cytochrome b-c1 complex, complex III, CIII) and cytochrome c oxidase (complex IV, CIV), that cooperate to transfer electrons derived from NADH and succinate to molecular oxygen, creating an electrochemical gradient over the inner membrane that drives transmembrane transport and the ATP synthase. Cytochrome c oxidase is the component of the respiratory chain that catalyzes the reduction of oxygen to water. Electrons originating from reduced cytochrome c in the intermembrane space (IMS) are transferred via the dinuclear copper A center (CU(A)) of subunit 2 and heme A of subunit 1 to the active site in subunit 1, a binuclear center (BNC) formed by heme A3 and copper B (CU(B)). The BNC reduces molecular oxygen to 2 water molecules using 4 electrons from cytochrome c in the IMS and 4 protons from the mitochondrial matrix.</text>
</comment>
<comment type="catalytic activity">
    <reaction evidence="1">
        <text>4 Fe(II)-[cytochrome c] + O2 + 8 H(+)(in) = 4 Fe(III)-[cytochrome c] + 2 H2O + 4 H(+)(out)</text>
        <dbReference type="Rhea" id="RHEA:11436"/>
        <dbReference type="Rhea" id="RHEA-COMP:10350"/>
        <dbReference type="Rhea" id="RHEA-COMP:14399"/>
        <dbReference type="ChEBI" id="CHEBI:15377"/>
        <dbReference type="ChEBI" id="CHEBI:15378"/>
        <dbReference type="ChEBI" id="CHEBI:15379"/>
        <dbReference type="ChEBI" id="CHEBI:29033"/>
        <dbReference type="ChEBI" id="CHEBI:29034"/>
        <dbReference type="EC" id="7.1.1.9"/>
    </reaction>
    <physiologicalReaction direction="left-to-right" evidence="1">
        <dbReference type="Rhea" id="RHEA:11437"/>
    </physiologicalReaction>
</comment>
<comment type="cofactor">
    <cofactor evidence="1">
        <name>Cu cation</name>
        <dbReference type="ChEBI" id="CHEBI:23378"/>
    </cofactor>
    <text evidence="1">Binds a dinuclear copper A center per subunit.</text>
</comment>
<comment type="subunit">
    <text evidence="1">Component of the cytochrome c oxidase (complex IV, CIV), a multisubunit enzyme composed of a catalytic core of 3 subunits and several supernumerary subunits. The complex exists as a monomer or a dimer and forms supercomplexes (SCs) in the inner mitochondrial membrane with ubiquinol-cytochrome c oxidoreductase (cytochrome b-c1 complex, complex III, CIII).</text>
</comment>
<comment type="subcellular location">
    <subcellularLocation>
        <location evidence="1">Mitochondrion inner membrane</location>
        <topology evidence="1">Multi-pass membrane protein</topology>
    </subcellularLocation>
</comment>
<comment type="similarity">
    <text evidence="4">Belongs to the cytochrome c oxidase subunit 2 family.</text>
</comment>
<sequence>MNIFSFYIINNDAPEPWQICYQDSATKIMSGIDKLTGEIFYYETLLLIIVGWVLISAIIKYTKTELSYKYFNHGTLIEILWTCSPAFILIAISFPSFKLLYLMDSIIDSQITIKVLGHQWYWSYEYSDYLDNSGDSISFDSIMIPTDDLEPGQFRLLEVDNRIVLPIHTHIRFICTSSDVIHSFAVPSLGLKIDALPGRLNGISTYVEREGTFYGQCSELCGVYHFGMPIVIEAVRIEKYLEWLNIHLDNTPSS</sequence>
<geneLocation type="mitochondrion" evidence="5"/>
<protein>
    <recommendedName>
        <fullName evidence="2">Cytochrome c oxidase subunit 2</fullName>
        <ecNumber>7.1.1.9</ecNumber>
    </recommendedName>
    <alternativeName>
        <fullName evidence="2">Cytochrome c oxidase polypeptide II</fullName>
    </alternativeName>
</protein>
<evidence type="ECO:0000250" key="1">
    <source>
        <dbReference type="UniProtKB" id="P00410"/>
    </source>
</evidence>
<evidence type="ECO:0000250" key="2">
    <source>
        <dbReference type="UniProtKB" id="Q0H8Y7"/>
    </source>
</evidence>
<evidence type="ECO:0000255" key="3"/>
<evidence type="ECO:0000305" key="4"/>
<evidence type="ECO:0000312" key="5">
    <source>
        <dbReference type="EMBL" id="AAW49494.1"/>
    </source>
</evidence>
<organism>
    <name type="scientific">Zancudomyces culisetae</name>
    <name type="common">Gut fungus</name>
    <name type="synonym">Smittium culisetae</name>
    <dbReference type="NCBI Taxonomy" id="1213189"/>
    <lineage>
        <taxon>Eukaryota</taxon>
        <taxon>Fungi</taxon>
        <taxon>Fungi incertae sedis</taxon>
        <taxon>Zoopagomycota</taxon>
        <taxon>Kickxellomycotina</taxon>
        <taxon>Harpellomycetes</taxon>
        <taxon>Harpellales</taxon>
        <taxon>Legeriomycetaceae</taxon>
        <taxon>Zancudomyces</taxon>
    </lineage>
</organism>
<gene>
    <name evidence="5" type="primary">cox2</name>
</gene>
<proteinExistence type="inferred from homology"/>
<reference evidence="5" key="1">
    <citation type="journal article" date="2005" name="Nucleic Acids Res.">
        <title>Comparative mitochondrial genomics in zygomycetes: bacteria-like RNase P RNAs, mobile elements, and a close source of the group I intron invasion in angiosperms.</title>
        <authorList>
            <person name="Seif E."/>
            <person name="Leigh J."/>
            <person name="Liu Y."/>
            <person name="Roewer I."/>
            <person name="Forget L."/>
            <person name="Lang B.F."/>
        </authorList>
    </citation>
    <scope>NUCLEOTIDE SEQUENCE [GENOMIC DNA]</scope>
    <source>
        <strain evidence="5">18-3</strain>
    </source>
</reference>
<name>COX2_ZANCU</name>
<dbReference type="EC" id="7.1.1.9"/>
<dbReference type="EMBL" id="AY863213">
    <property type="protein sequence ID" value="AAW49494.1"/>
    <property type="molecule type" value="Genomic_DNA"/>
</dbReference>
<dbReference type="RefSeq" id="YP_203327.1">
    <property type="nucleotide sequence ID" value="NC_006837.1"/>
</dbReference>
<dbReference type="SMR" id="Q3T4C0"/>
<dbReference type="GeneID" id="3260112"/>
<dbReference type="GO" id="GO:0005743">
    <property type="term" value="C:mitochondrial inner membrane"/>
    <property type="evidence" value="ECO:0007669"/>
    <property type="project" value="UniProtKB-SubCell"/>
</dbReference>
<dbReference type="GO" id="GO:0005507">
    <property type="term" value="F:copper ion binding"/>
    <property type="evidence" value="ECO:0007669"/>
    <property type="project" value="InterPro"/>
</dbReference>
<dbReference type="GO" id="GO:0004129">
    <property type="term" value="F:cytochrome-c oxidase activity"/>
    <property type="evidence" value="ECO:0007669"/>
    <property type="project" value="UniProtKB-EC"/>
</dbReference>
<dbReference type="GO" id="GO:0042773">
    <property type="term" value="P:ATP synthesis coupled electron transport"/>
    <property type="evidence" value="ECO:0007669"/>
    <property type="project" value="TreeGrafter"/>
</dbReference>
<dbReference type="CDD" id="cd13912">
    <property type="entry name" value="CcO_II_C"/>
    <property type="match status" value="1"/>
</dbReference>
<dbReference type="FunFam" id="2.60.40.420:FF:000001">
    <property type="entry name" value="Cytochrome c oxidase subunit 2"/>
    <property type="match status" value="1"/>
</dbReference>
<dbReference type="Gene3D" id="1.10.287.90">
    <property type="match status" value="1"/>
</dbReference>
<dbReference type="Gene3D" id="2.60.40.420">
    <property type="entry name" value="Cupredoxins - blue copper proteins"/>
    <property type="match status" value="1"/>
</dbReference>
<dbReference type="InterPro" id="IPR045187">
    <property type="entry name" value="CcO_II"/>
</dbReference>
<dbReference type="InterPro" id="IPR002429">
    <property type="entry name" value="CcO_II-like_C"/>
</dbReference>
<dbReference type="InterPro" id="IPR034210">
    <property type="entry name" value="CcO_II_C"/>
</dbReference>
<dbReference type="InterPro" id="IPR001505">
    <property type="entry name" value="Copper_CuA"/>
</dbReference>
<dbReference type="InterPro" id="IPR008972">
    <property type="entry name" value="Cupredoxin"/>
</dbReference>
<dbReference type="InterPro" id="IPR014222">
    <property type="entry name" value="Cyt_c_oxidase_su2"/>
</dbReference>
<dbReference type="InterPro" id="IPR011759">
    <property type="entry name" value="Cyt_c_oxidase_su2_TM_dom"/>
</dbReference>
<dbReference type="InterPro" id="IPR036257">
    <property type="entry name" value="Cyt_c_oxidase_su2_TM_sf"/>
</dbReference>
<dbReference type="NCBIfam" id="TIGR02866">
    <property type="entry name" value="CoxB"/>
    <property type="match status" value="1"/>
</dbReference>
<dbReference type="PANTHER" id="PTHR22888:SF9">
    <property type="entry name" value="CYTOCHROME C OXIDASE SUBUNIT 2"/>
    <property type="match status" value="1"/>
</dbReference>
<dbReference type="PANTHER" id="PTHR22888">
    <property type="entry name" value="CYTOCHROME C OXIDASE, SUBUNIT II"/>
    <property type="match status" value="1"/>
</dbReference>
<dbReference type="Pfam" id="PF00116">
    <property type="entry name" value="COX2"/>
    <property type="match status" value="1"/>
</dbReference>
<dbReference type="Pfam" id="PF02790">
    <property type="entry name" value="COX2_TM"/>
    <property type="match status" value="1"/>
</dbReference>
<dbReference type="PRINTS" id="PR01166">
    <property type="entry name" value="CYCOXIDASEII"/>
</dbReference>
<dbReference type="SUPFAM" id="SSF49503">
    <property type="entry name" value="Cupredoxins"/>
    <property type="match status" value="1"/>
</dbReference>
<dbReference type="SUPFAM" id="SSF81464">
    <property type="entry name" value="Cytochrome c oxidase subunit II-like, transmembrane region"/>
    <property type="match status" value="1"/>
</dbReference>
<dbReference type="PROSITE" id="PS00078">
    <property type="entry name" value="COX2"/>
    <property type="match status" value="1"/>
</dbReference>
<dbReference type="PROSITE" id="PS50857">
    <property type="entry name" value="COX2_CUA"/>
    <property type="match status" value="1"/>
</dbReference>
<dbReference type="PROSITE" id="PS50999">
    <property type="entry name" value="COX2_TM"/>
    <property type="match status" value="1"/>
</dbReference>